<comment type="function">
    <text>Inner spore coat protein which seems to play a role in germination.</text>
</comment>
<comment type="subcellular location">
    <subcellularLocation>
        <location evidence="1">Spore coat</location>
    </subcellularLocation>
</comment>
<comment type="miscellaneous">
    <text>Present in an increased level in yabG mutant spores.</text>
</comment>
<comment type="sequence caution" evidence="3">
    <conflict type="erroneous initiation">
        <sequence resource="EMBL-CDS" id="CAA32004"/>
    </conflict>
    <text>Extended N-terminus.</text>
</comment>
<feature type="propeptide" id="PRO_0000020986" evidence="2">
    <location>
        <begin position="1"/>
        <end position="19"/>
    </location>
</feature>
<feature type="chain" id="PRO_0000020987" description="Spore coat protein T">
    <location>
        <begin position="20"/>
        <end position="82"/>
    </location>
</feature>
<reference key="1">
    <citation type="journal article" date="1989" name="Mol. Microbiol.">
        <title>Gene structure and precursor processing of a novel Bacillus subtilis spore coat protein.</title>
        <authorList>
            <person name="Aronson A.I."/>
            <person name="Song H.Y."/>
            <person name="Bourne N."/>
        </authorList>
    </citation>
    <scope>NUCLEOTIDE SEQUENCE [GENOMIC DNA]</scope>
    <scope>PROTEIN SEQUENCE OF THE N-TERMINUS OF THE MATURE PROTEIN</scope>
    <source>
        <strain>168 / JH642</strain>
    </source>
</reference>
<reference key="2">
    <citation type="journal article" date="1997" name="Nature">
        <title>The complete genome sequence of the Gram-positive bacterium Bacillus subtilis.</title>
        <authorList>
            <person name="Kunst F."/>
            <person name="Ogasawara N."/>
            <person name="Moszer I."/>
            <person name="Albertini A.M."/>
            <person name="Alloni G."/>
            <person name="Azevedo V."/>
            <person name="Bertero M.G."/>
            <person name="Bessieres P."/>
            <person name="Bolotin A."/>
            <person name="Borchert S."/>
            <person name="Borriss R."/>
            <person name="Boursier L."/>
            <person name="Brans A."/>
            <person name="Braun M."/>
            <person name="Brignell S.C."/>
            <person name="Bron S."/>
            <person name="Brouillet S."/>
            <person name="Bruschi C.V."/>
            <person name="Caldwell B."/>
            <person name="Capuano V."/>
            <person name="Carter N.M."/>
            <person name="Choi S.-K."/>
            <person name="Codani J.-J."/>
            <person name="Connerton I.F."/>
            <person name="Cummings N.J."/>
            <person name="Daniel R.A."/>
            <person name="Denizot F."/>
            <person name="Devine K.M."/>
            <person name="Duesterhoeft A."/>
            <person name="Ehrlich S.D."/>
            <person name="Emmerson P.T."/>
            <person name="Entian K.-D."/>
            <person name="Errington J."/>
            <person name="Fabret C."/>
            <person name="Ferrari E."/>
            <person name="Foulger D."/>
            <person name="Fritz C."/>
            <person name="Fujita M."/>
            <person name="Fujita Y."/>
            <person name="Fuma S."/>
            <person name="Galizzi A."/>
            <person name="Galleron N."/>
            <person name="Ghim S.-Y."/>
            <person name="Glaser P."/>
            <person name="Goffeau A."/>
            <person name="Golightly E.J."/>
            <person name="Grandi G."/>
            <person name="Guiseppi G."/>
            <person name="Guy B.J."/>
            <person name="Haga K."/>
            <person name="Haiech J."/>
            <person name="Harwood C.R."/>
            <person name="Henaut A."/>
            <person name="Hilbert H."/>
            <person name="Holsappel S."/>
            <person name="Hosono S."/>
            <person name="Hullo M.-F."/>
            <person name="Itaya M."/>
            <person name="Jones L.-M."/>
            <person name="Joris B."/>
            <person name="Karamata D."/>
            <person name="Kasahara Y."/>
            <person name="Klaerr-Blanchard M."/>
            <person name="Klein C."/>
            <person name="Kobayashi Y."/>
            <person name="Koetter P."/>
            <person name="Koningstein G."/>
            <person name="Krogh S."/>
            <person name="Kumano M."/>
            <person name="Kurita K."/>
            <person name="Lapidus A."/>
            <person name="Lardinois S."/>
            <person name="Lauber J."/>
            <person name="Lazarevic V."/>
            <person name="Lee S.-M."/>
            <person name="Levine A."/>
            <person name="Liu H."/>
            <person name="Masuda S."/>
            <person name="Mauel C."/>
            <person name="Medigue C."/>
            <person name="Medina N."/>
            <person name="Mellado R.P."/>
            <person name="Mizuno M."/>
            <person name="Moestl D."/>
            <person name="Nakai S."/>
            <person name="Noback M."/>
            <person name="Noone D."/>
            <person name="O'Reilly M."/>
            <person name="Ogawa K."/>
            <person name="Ogiwara A."/>
            <person name="Oudega B."/>
            <person name="Park S.-H."/>
            <person name="Parro V."/>
            <person name="Pohl T.M."/>
            <person name="Portetelle D."/>
            <person name="Porwollik S."/>
            <person name="Prescott A.M."/>
            <person name="Presecan E."/>
            <person name="Pujic P."/>
            <person name="Purnelle B."/>
            <person name="Rapoport G."/>
            <person name="Rey M."/>
            <person name="Reynolds S."/>
            <person name="Rieger M."/>
            <person name="Rivolta C."/>
            <person name="Rocha E."/>
            <person name="Roche B."/>
            <person name="Rose M."/>
            <person name="Sadaie Y."/>
            <person name="Sato T."/>
            <person name="Scanlan E."/>
            <person name="Schleich S."/>
            <person name="Schroeter R."/>
            <person name="Scoffone F."/>
            <person name="Sekiguchi J."/>
            <person name="Sekowska A."/>
            <person name="Seror S.J."/>
            <person name="Serror P."/>
            <person name="Shin B.-S."/>
            <person name="Soldo B."/>
            <person name="Sorokin A."/>
            <person name="Tacconi E."/>
            <person name="Takagi T."/>
            <person name="Takahashi H."/>
            <person name="Takemaru K."/>
            <person name="Takeuchi M."/>
            <person name="Tamakoshi A."/>
            <person name="Tanaka T."/>
            <person name="Terpstra P."/>
            <person name="Tognoni A."/>
            <person name="Tosato V."/>
            <person name="Uchiyama S."/>
            <person name="Vandenbol M."/>
            <person name="Vannier F."/>
            <person name="Vassarotti A."/>
            <person name="Viari A."/>
            <person name="Wambutt R."/>
            <person name="Wedler E."/>
            <person name="Wedler H."/>
            <person name="Weitzenegger T."/>
            <person name="Winters P."/>
            <person name="Wipat A."/>
            <person name="Yamamoto H."/>
            <person name="Yamane K."/>
            <person name="Yasumoto K."/>
            <person name="Yata K."/>
            <person name="Yoshida K."/>
            <person name="Yoshikawa H.-F."/>
            <person name="Zumstein E."/>
            <person name="Yoshikawa H."/>
            <person name="Danchin A."/>
        </authorList>
    </citation>
    <scope>NUCLEOTIDE SEQUENCE [LARGE SCALE GENOMIC DNA]</scope>
    <source>
        <strain>168</strain>
    </source>
</reference>
<reference key="3">
    <citation type="journal article" date="1991" name="J. Bacteriol.">
        <title>Structural and germination defects of Bacillus subtilis spores with altered contents of a spore coat protein.</title>
        <authorList>
            <person name="Bourne N."/>
            <person name="Fitz-James P.C."/>
            <person name="Aronson A.I."/>
        </authorList>
    </citation>
    <scope>PROTEIN SEQUENCE OF 3-11</scope>
    <scope>TRANSCRIPTION START SITE</scope>
    <source>
        <strain>168 / JH642</strain>
    </source>
</reference>
<reference key="4">
    <citation type="journal article" date="2000" name="J. Bacteriol.">
        <title>The Bacillus subtilis yabG gene is transcribed by SigK RNA polymerase during sporulation, and yabG mutant spores have altered coat protein composition.</title>
        <authorList>
            <person name="Takamatsu H."/>
            <person name="Kodama T."/>
            <person name="Imamura A."/>
            <person name="Asai K."/>
            <person name="Kobayashi K."/>
            <person name="Nakayama T."/>
            <person name="Ogasawara N."/>
            <person name="Watabe K."/>
        </authorList>
    </citation>
    <scope>PROTEIN SEQUENCE OF 2-11</scope>
    <scope>SUBCELLULAR LOCATION</scope>
    <scope>AMOUNT IN YABG MUTANT SPORES</scope>
    <source>
        <strain>168</strain>
    </source>
</reference>
<dbReference type="EMBL" id="X13740">
    <property type="protein sequence ID" value="CAA32004.1"/>
    <property type="status" value="ALT_INIT"/>
    <property type="molecule type" value="Genomic_DNA"/>
</dbReference>
<dbReference type="EMBL" id="AL009126">
    <property type="protein sequence ID" value="CAB13066.2"/>
    <property type="molecule type" value="Genomic_DNA"/>
</dbReference>
<dbReference type="PIR" id="S04835">
    <property type="entry name" value="A41051"/>
</dbReference>
<dbReference type="RefSeq" id="NP_389091.2">
    <property type="nucleotide sequence ID" value="NC_000964.3"/>
</dbReference>
<dbReference type="RefSeq" id="WP_003245601.1">
    <property type="nucleotide sequence ID" value="NZ_OZ025638.1"/>
</dbReference>
<dbReference type="FunCoup" id="P11863">
    <property type="interactions" value="68"/>
</dbReference>
<dbReference type="STRING" id="224308.BSU12090"/>
<dbReference type="PaxDb" id="224308-BSU12090"/>
<dbReference type="EnsemblBacteria" id="CAB13066">
    <property type="protein sequence ID" value="CAB13066"/>
    <property type="gene ID" value="BSU_12090"/>
</dbReference>
<dbReference type="GeneID" id="939403"/>
<dbReference type="KEGG" id="bsu:BSU12090"/>
<dbReference type="PATRIC" id="fig|224308.179.peg.1306"/>
<dbReference type="InParanoid" id="P11863"/>
<dbReference type="BioCyc" id="BSUB:BSU12090-MONOMER"/>
<dbReference type="Proteomes" id="UP000001570">
    <property type="component" value="Chromosome"/>
</dbReference>
<dbReference type="GO" id="GO:0030435">
    <property type="term" value="P:sporulation resulting in formation of a cellular spore"/>
    <property type="evidence" value="ECO:0007669"/>
    <property type="project" value="UniProtKB-KW"/>
</dbReference>
<sequence>MDYPLNEQSFEQITPYDERQPYYYPRPRPPFYPPYYYPRPYYPFYPFYPRPPYYYPRPRPPYYPWYGYGGGYGGGYGGGYGY</sequence>
<proteinExistence type="evidence at protein level"/>
<protein>
    <recommendedName>
        <fullName>Spore coat protein T</fullName>
    </recommendedName>
</protein>
<keyword id="KW-0903">Direct protein sequencing</keyword>
<keyword id="KW-1185">Reference proteome</keyword>
<keyword id="KW-0749">Sporulation</keyword>
<gene>
    <name type="primary">cotT</name>
    <name type="ordered locus">BSU12090</name>
</gene>
<accession>P11863</accession>
<name>COTT_BACSU</name>
<organism>
    <name type="scientific">Bacillus subtilis (strain 168)</name>
    <dbReference type="NCBI Taxonomy" id="224308"/>
    <lineage>
        <taxon>Bacteria</taxon>
        <taxon>Bacillati</taxon>
        <taxon>Bacillota</taxon>
        <taxon>Bacilli</taxon>
        <taxon>Bacillales</taxon>
        <taxon>Bacillaceae</taxon>
        <taxon>Bacillus</taxon>
    </lineage>
</organism>
<evidence type="ECO:0000269" key="1">
    <source>
    </source>
</evidence>
<evidence type="ECO:0000269" key="2">
    <source>
    </source>
</evidence>
<evidence type="ECO:0000305" key="3"/>